<protein>
    <recommendedName>
        <fullName>Putative protein FPV235</fullName>
    </recommendedName>
    <alternativeName>
        <fullName>BamHI-ORF11</fullName>
    </alternativeName>
</protein>
<proteinExistence type="predicted"/>
<reference key="1">
    <citation type="journal article" date="1988" name="J. Gen. Virol.">
        <title>Sequence analysis of an 11.2 kilobase, near-terminal, BamHI fragment of fowlpox virus.</title>
        <authorList>
            <person name="Tomley F."/>
            <person name="Binns M."/>
            <person name="Campbell J."/>
            <person name="Boursnell M.E.G."/>
        </authorList>
    </citation>
    <scope>NUCLEOTIDE SEQUENCE [GENOMIC DNA]</scope>
    <source>
        <strain>FP-9 / Isolate HP-438</strain>
    </source>
</reference>
<reference key="2">
    <citation type="journal article" date="2000" name="J. Virol.">
        <title>The genome of fowlpox virus.</title>
        <authorList>
            <person name="Afonso C.L."/>
            <person name="Tulman E.R."/>
            <person name="Lu Z."/>
            <person name="Zsak L."/>
            <person name="Kutish G.F."/>
            <person name="Rock D.L."/>
        </authorList>
    </citation>
    <scope>NUCLEOTIDE SEQUENCE [LARGE SCALE GENOMIC DNA]</scope>
</reference>
<organismHost>
    <name type="scientific">Vertebrata</name>
    <dbReference type="NCBI Taxonomy" id="7742"/>
</organismHost>
<feature type="chain" id="PRO_0000046728" description="Putative protein FPV235">
    <location>
        <begin position="1"/>
        <end position="143"/>
    </location>
</feature>
<accession>P14372</accession>
<name>V235_FOWPN</name>
<organism>
    <name type="scientific">Fowlpox virus (strain NVSL)</name>
    <name type="common">FPV</name>
    <dbReference type="NCBI Taxonomy" id="928301"/>
    <lineage>
        <taxon>Viruses</taxon>
        <taxon>Varidnaviria</taxon>
        <taxon>Bamfordvirae</taxon>
        <taxon>Nucleocytoviricota</taxon>
        <taxon>Pokkesviricetes</taxon>
        <taxon>Chitovirales</taxon>
        <taxon>Poxviridae</taxon>
        <taxon>Chordopoxvirinae</taxon>
        <taxon>Avipoxvirus</taxon>
        <taxon>Fowlpox virus</taxon>
    </lineage>
</organism>
<dbReference type="EMBL" id="D00295">
    <property type="protein sequence ID" value="BAA00206.1"/>
    <property type="molecule type" value="Genomic_DNA"/>
</dbReference>
<dbReference type="EMBL" id="AF198100">
    <property type="protein sequence ID" value="AAF44579.1"/>
    <property type="molecule type" value="Genomic_DNA"/>
</dbReference>
<dbReference type="PIR" id="B30087">
    <property type="entry name" value="WMVZEL"/>
</dbReference>
<dbReference type="RefSeq" id="NP_039198.1">
    <property type="nucleotide sequence ID" value="NC_002188.1"/>
</dbReference>
<dbReference type="SMR" id="P14372"/>
<dbReference type="GeneID" id="1486807"/>
<dbReference type="KEGG" id="vg:1486807"/>
<dbReference type="Proteomes" id="UP000008597">
    <property type="component" value="Segment"/>
</dbReference>
<dbReference type="Gene3D" id="3.10.100.10">
    <property type="entry name" value="Mannose-Binding Protein A, subunit A"/>
    <property type="match status" value="1"/>
</dbReference>
<dbReference type="InterPro" id="IPR016186">
    <property type="entry name" value="C-type_lectin-like/link_sf"/>
</dbReference>
<dbReference type="InterPro" id="IPR016187">
    <property type="entry name" value="CTDL_fold"/>
</dbReference>
<dbReference type="SUPFAM" id="SSF56436">
    <property type="entry name" value="C-type lectin-like"/>
    <property type="match status" value="1"/>
</dbReference>
<sequence length="143" mass="16662">MCKKARKRGLLTIAFTILLFVIILVDIDRDRYLVRCGKDWLEFDNLCYFISENKLSWDDSMMVCDNLGGGNNININTNSGLLNTSKDYWIKIVDELDCTNINMCNFLYSNIVGCDICTIEKFYICIKPINKINLFSYFVEYTK</sequence>
<gene>
    <name type="ordered locus">FPV235</name>
</gene>
<keyword id="KW-1185">Reference proteome</keyword>